<evidence type="ECO:0000255" key="1">
    <source>
        <dbReference type="HAMAP-Rule" id="MF_01633"/>
    </source>
</evidence>
<sequence length="222" mass="24887">MESVLNNEKAIVVFSGGQDSTTCLFYAKKHFKEVELVTFNYGQRHDTEIEVAKQIAQDQGMKHHVLDMSLLSQLTPNALTQHDMEITNNEDGIPNTFVPARNLLFLSFAGALAYQIGAKHIITGVCETDFSGYPDCRDSFIKSMNVTLSLAMDKDFVIHTPLMWLNKAETWKLSDELEVLDYIRTKTLTCYNGIIGDGCGECPACHLRQRGLNQYLESKGAL</sequence>
<gene>
    <name evidence="1" type="primary">queC</name>
    <name type="ordered locus">SaurJH1_0752</name>
</gene>
<name>QUEC_STAA2</name>
<keyword id="KW-0067">ATP-binding</keyword>
<keyword id="KW-0436">Ligase</keyword>
<keyword id="KW-0479">Metal-binding</keyword>
<keyword id="KW-0547">Nucleotide-binding</keyword>
<keyword id="KW-0671">Queuosine biosynthesis</keyword>
<keyword id="KW-0862">Zinc</keyword>
<feature type="chain" id="PRO_0000336953" description="7-cyano-7-deazaguanine synthase">
    <location>
        <begin position="1"/>
        <end position="222"/>
    </location>
</feature>
<feature type="binding site" evidence="1">
    <location>
        <begin position="14"/>
        <end position="24"/>
    </location>
    <ligand>
        <name>ATP</name>
        <dbReference type="ChEBI" id="CHEBI:30616"/>
    </ligand>
</feature>
<feature type="binding site" evidence="1">
    <location>
        <position position="190"/>
    </location>
    <ligand>
        <name>Zn(2+)</name>
        <dbReference type="ChEBI" id="CHEBI:29105"/>
    </ligand>
</feature>
<feature type="binding site" evidence="1">
    <location>
        <position position="199"/>
    </location>
    <ligand>
        <name>Zn(2+)</name>
        <dbReference type="ChEBI" id="CHEBI:29105"/>
    </ligand>
</feature>
<feature type="binding site" evidence="1">
    <location>
        <position position="202"/>
    </location>
    <ligand>
        <name>Zn(2+)</name>
        <dbReference type="ChEBI" id="CHEBI:29105"/>
    </ligand>
</feature>
<feature type="binding site" evidence="1">
    <location>
        <position position="205"/>
    </location>
    <ligand>
        <name>Zn(2+)</name>
        <dbReference type="ChEBI" id="CHEBI:29105"/>
    </ligand>
</feature>
<proteinExistence type="inferred from homology"/>
<organism>
    <name type="scientific">Staphylococcus aureus (strain JH1)</name>
    <dbReference type="NCBI Taxonomy" id="359787"/>
    <lineage>
        <taxon>Bacteria</taxon>
        <taxon>Bacillati</taxon>
        <taxon>Bacillota</taxon>
        <taxon>Bacilli</taxon>
        <taxon>Bacillales</taxon>
        <taxon>Staphylococcaceae</taxon>
        <taxon>Staphylococcus</taxon>
    </lineage>
</organism>
<reference key="1">
    <citation type="submission" date="2007-06" db="EMBL/GenBank/DDBJ databases">
        <title>Complete sequence of chromosome of Staphylococcus aureus subsp. aureus JH1.</title>
        <authorList>
            <consortium name="US DOE Joint Genome Institute"/>
            <person name="Copeland A."/>
            <person name="Lucas S."/>
            <person name="Lapidus A."/>
            <person name="Barry K."/>
            <person name="Detter J.C."/>
            <person name="Glavina del Rio T."/>
            <person name="Hammon N."/>
            <person name="Israni S."/>
            <person name="Dalin E."/>
            <person name="Tice H."/>
            <person name="Pitluck S."/>
            <person name="Chain P."/>
            <person name="Malfatti S."/>
            <person name="Shin M."/>
            <person name="Vergez L."/>
            <person name="Schmutz J."/>
            <person name="Larimer F."/>
            <person name="Land M."/>
            <person name="Hauser L."/>
            <person name="Kyrpides N."/>
            <person name="Ivanova N."/>
            <person name="Tomasz A."/>
            <person name="Richardson P."/>
        </authorList>
    </citation>
    <scope>NUCLEOTIDE SEQUENCE [LARGE SCALE GENOMIC DNA]</scope>
    <source>
        <strain>JH1</strain>
    </source>
</reference>
<dbReference type="EC" id="6.3.4.20" evidence="1"/>
<dbReference type="EMBL" id="CP000736">
    <property type="protein sequence ID" value="ABR51608.1"/>
    <property type="molecule type" value="Genomic_DNA"/>
</dbReference>
<dbReference type="SMR" id="A6TZJ0"/>
<dbReference type="KEGG" id="sah:SaurJH1_0752"/>
<dbReference type="HOGENOM" id="CLU_081854_0_0_9"/>
<dbReference type="UniPathway" id="UPA00391"/>
<dbReference type="GO" id="GO:0005524">
    <property type="term" value="F:ATP binding"/>
    <property type="evidence" value="ECO:0007669"/>
    <property type="project" value="UniProtKB-UniRule"/>
</dbReference>
<dbReference type="GO" id="GO:0016879">
    <property type="term" value="F:ligase activity, forming carbon-nitrogen bonds"/>
    <property type="evidence" value="ECO:0007669"/>
    <property type="project" value="UniProtKB-UniRule"/>
</dbReference>
<dbReference type="GO" id="GO:0008270">
    <property type="term" value="F:zinc ion binding"/>
    <property type="evidence" value="ECO:0007669"/>
    <property type="project" value="UniProtKB-UniRule"/>
</dbReference>
<dbReference type="GO" id="GO:0008616">
    <property type="term" value="P:queuosine biosynthetic process"/>
    <property type="evidence" value="ECO:0007669"/>
    <property type="project" value="UniProtKB-UniRule"/>
</dbReference>
<dbReference type="CDD" id="cd01995">
    <property type="entry name" value="QueC-like"/>
    <property type="match status" value="1"/>
</dbReference>
<dbReference type="FunFam" id="3.40.50.620:FF:000017">
    <property type="entry name" value="7-cyano-7-deazaguanine synthase"/>
    <property type="match status" value="1"/>
</dbReference>
<dbReference type="Gene3D" id="3.40.50.620">
    <property type="entry name" value="HUPs"/>
    <property type="match status" value="1"/>
</dbReference>
<dbReference type="HAMAP" id="MF_01633">
    <property type="entry name" value="QueC"/>
    <property type="match status" value="1"/>
</dbReference>
<dbReference type="InterPro" id="IPR018317">
    <property type="entry name" value="QueC"/>
</dbReference>
<dbReference type="InterPro" id="IPR014729">
    <property type="entry name" value="Rossmann-like_a/b/a_fold"/>
</dbReference>
<dbReference type="NCBIfam" id="TIGR00364">
    <property type="entry name" value="7-cyano-7-deazaguanine synthase QueC"/>
    <property type="match status" value="1"/>
</dbReference>
<dbReference type="PANTHER" id="PTHR42914">
    <property type="entry name" value="7-CYANO-7-DEAZAGUANINE SYNTHASE"/>
    <property type="match status" value="1"/>
</dbReference>
<dbReference type="PANTHER" id="PTHR42914:SF1">
    <property type="entry name" value="7-CYANO-7-DEAZAGUANINE SYNTHASE"/>
    <property type="match status" value="1"/>
</dbReference>
<dbReference type="Pfam" id="PF06508">
    <property type="entry name" value="QueC"/>
    <property type="match status" value="1"/>
</dbReference>
<dbReference type="PIRSF" id="PIRSF006293">
    <property type="entry name" value="ExsB"/>
    <property type="match status" value="1"/>
</dbReference>
<dbReference type="SUPFAM" id="SSF52402">
    <property type="entry name" value="Adenine nucleotide alpha hydrolases-like"/>
    <property type="match status" value="1"/>
</dbReference>
<accession>A6TZJ0</accession>
<protein>
    <recommendedName>
        <fullName evidence="1">7-cyano-7-deazaguanine synthase</fullName>
        <ecNumber evidence="1">6.3.4.20</ecNumber>
    </recommendedName>
    <alternativeName>
        <fullName evidence="1">7-cyano-7-carbaguanine synthase</fullName>
    </alternativeName>
    <alternativeName>
        <fullName evidence="1">PreQ(0) synthase</fullName>
    </alternativeName>
    <alternativeName>
        <fullName evidence="1">Queuosine biosynthesis protein QueC</fullName>
    </alternativeName>
</protein>
<comment type="function">
    <text evidence="1">Catalyzes the ATP-dependent conversion of 7-carboxy-7-deazaguanine (CDG) to 7-cyano-7-deazaguanine (preQ(0)).</text>
</comment>
<comment type="catalytic activity">
    <reaction evidence="1">
        <text>7-carboxy-7-deazaguanine + NH4(+) + ATP = 7-cyano-7-deazaguanine + ADP + phosphate + H2O + H(+)</text>
        <dbReference type="Rhea" id="RHEA:27982"/>
        <dbReference type="ChEBI" id="CHEBI:15377"/>
        <dbReference type="ChEBI" id="CHEBI:15378"/>
        <dbReference type="ChEBI" id="CHEBI:28938"/>
        <dbReference type="ChEBI" id="CHEBI:30616"/>
        <dbReference type="ChEBI" id="CHEBI:43474"/>
        <dbReference type="ChEBI" id="CHEBI:45075"/>
        <dbReference type="ChEBI" id="CHEBI:61036"/>
        <dbReference type="ChEBI" id="CHEBI:456216"/>
        <dbReference type="EC" id="6.3.4.20"/>
    </reaction>
</comment>
<comment type="cofactor">
    <cofactor evidence="1">
        <name>Zn(2+)</name>
        <dbReference type="ChEBI" id="CHEBI:29105"/>
    </cofactor>
    <text evidence="1">Binds 1 zinc ion per subunit.</text>
</comment>
<comment type="pathway">
    <text evidence="1">Purine metabolism; 7-cyano-7-deazaguanine biosynthesis.</text>
</comment>
<comment type="subunit">
    <text evidence="1">Homodimer.</text>
</comment>
<comment type="similarity">
    <text evidence="1">Belongs to the QueC family.</text>
</comment>